<organism>
    <name type="scientific">Eremothecium gossypii (strain ATCC 10895 / CBS 109.51 / FGSC 9923 / NRRL Y-1056)</name>
    <name type="common">Yeast</name>
    <name type="synonym">Ashbya gossypii</name>
    <dbReference type="NCBI Taxonomy" id="284811"/>
    <lineage>
        <taxon>Eukaryota</taxon>
        <taxon>Fungi</taxon>
        <taxon>Dikarya</taxon>
        <taxon>Ascomycota</taxon>
        <taxon>Saccharomycotina</taxon>
        <taxon>Saccharomycetes</taxon>
        <taxon>Saccharomycetales</taxon>
        <taxon>Saccharomycetaceae</taxon>
        <taxon>Eremothecium</taxon>
    </lineage>
</organism>
<feature type="initiator methionine" description="Removed" evidence="1">
    <location>
        <position position="1"/>
    </location>
</feature>
<feature type="chain" id="PRO_0000158281" description="Histone H4.2">
    <location>
        <begin position="2"/>
        <end position="103"/>
    </location>
</feature>
<feature type="DNA-binding region">
    <location>
        <begin position="17"/>
        <end position="21"/>
    </location>
</feature>
<feature type="region of interest" description="Disordered" evidence="4">
    <location>
        <begin position="1"/>
        <end position="20"/>
    </location>
</feature>
<feature type="compositionally biased region" description="Gly residues" evidence="4">
    <location>
        <begin position="1"/>
        <end position="14"/>
    </location>
</feature>
<feature type="modified residue" description="N6-acetyl-N6-methyllysine; alternate" evidence="3">
    <location>
        <position position="6"/>
    </location>
</feature>
<feature type="modified residue" description="N6-methyllysine; alternate" evidence="2">
    <location>
        <position position="6"/>
    </location>
</feature>
<feature type="modified residue" description="N6-methyllysine; alternate" evidence="2">
    <location>
        <position position="9"/>
    </location>
</feature>
<feature type="modified residue" description="N6-acetyl-N6-methyllysine; alternate" evidence="3">
    <location>
        <position position="13"/>
    </location>
</feature>
<feature type="modified residue" description="N6-methyllysine; alternate" evidence="2">
    <location>
        <position position="13"/>
    </location>
</feature>
<feature type="modified residue" description="N6-glutaryllysine" evidence="2">
    <location>
        <position position="92"/>
    </location>
</feature>
<gene>
    <name type="primary">HHF2</name>
    <name type="ordered locus">AER012C</name>
</gene>
<proteinExistence type="inferred from homology"/>
<name>H42_EREGS</name>
<comment type="function">
    <text evidence="1">Core component of nucleosome. Nucleosomes wrap and compact DNA into chromatin, limiting DNA accessibility to the cellular machineries which require DNA as a template. Histones thereby play a central role in transcription regulation, DNA repair, DNA replication and chromosomal stability. DNA accessibility is regulated via a complex set of post-translational modifications of histones, also called histone code, and nucleosome remodeling (By similarity).</text>
</comment>
<comment type="subunit">
    <text evidence="1">The nucleosome is a histone octamer containing two molecules each of H2A, H2B, H3 and H4 assembled in one H3-H4 heterotetramer and two H2A-H2B heterodimers. The octamer wraps approximately 147 bp of DNA (By similarity).</text>
</comment>
<comment type="subcellular location">
    <subcellularLocation>
        <location evidence="1">Nucleus</location>
    </subcellularLocation>
    <subcellularLocation>
        <location evidence="1">Chromosome</location>
    </subcellularLocation>
</comment>
<comment type="PTM">
    <text evidence="2">Glutarylation at Lys-92 (H4K91glu) destabilizes nucleosomes by promoting dissociation of the H2A-H2B dimers from nucleosomes.</text>
</comment>
<comment type="similarity">
    <text evidence="5">Belongs to the histone H4 family.</text>
</comment>
<dbReference type="EMBL" id="AE016818">
    <property type="protein sequence ID" value="AAS52696.2"/>
    <property type="molecule type" value="Genomic_DNA"/>
</dbReference>
<dbReference type="RefSeq" id="NP_983895.2">
    <property type="nucleotide sequence ID" value="NM_209248.2"/>
</dbReference>
<dbReference type="RefSeq" id="NP_984872.2">
    <property type="nucleotide sequence ID" value="NM_210226.2"/>
</dbReference>
<dbReference type="SMR" id="Q75AX1"/>
<dbReference type="FunCoup" id="Q75AX1">
    <property type="interactions" value="1524"/>
</dbReference>
<dbReference type="STRING" id="284811.Q75AX1"/>
<dbReference type="EnsemblFungi" id="AAS51719">
    <property type="protein sequence ID" value="AAS51719"/>
    <property type="gene ID" value="AGOS_ADL201W"/>
</dbReference>
<dbReference type="EnsemblFungi" id="AAS52696">
    <property type="protein sequence ID" value="AAS52696"/>
    <property type="gene ID" value="AGOS_AER012C"/>
</dbReference>
<dbReference type="GeneID" id="4621072"/>
<dbReference type="KEGG" id="ago:AGOS_ADL201W"/>
<dbReference type="KEGG" id="ago:AGOS_AER012C"/>
<dbReference type="HOGENOM" id="CLU_109117_2_3_1"/>
<dbReference type="InParanoid" id="Q75AX1"/>
<dbReference type="OrthoDB" id="4061161at2759"/>
<dbReference type="Proteomes" id="UP000000591">
    <property type="component" value="Chromosome V"/>
</dbReference>
<dbReference type="GO" id="GO:0000786">
    <property type="term" value="C:nucleosome"/>
    <property type="evidence" value="ECO:0007669"/>
    <property type="project" value="UniProtKB-KW"/>
</dbReference>
<dbReference type="GO" id="GO:0005634">
    <property type="term" value="C:nucleus"/>
    <property type="evidence" value="ECO:0007669"/>
    <property type="project" value="UniProtKB-SubCell"/>
</dbReference>
<dbReference type="GO" id="GO:0003677">
    <property type="term" value="F:DNA binding"/>
    <property type="evidence" value="ECO:0007669"/>
    <property type="project" value="UniProtKB-KW"/>
</dbReference>
<dbReference type="GO" id="GO:0046982">
    <property type="term" value="F:protein heterodimerization activity"/>
    <property type="evidence" value="ECO:0007669"/>
    <property type="project" value="InterPro"/>
</dbReference>
<dbReference type="GO" id="GO:0030527">
    <property type="term" value="F:structural constituent of chromatin"/>
    <property type="evidence" value="ECO:0007669"/>
    <property type="project" value="InterPro"/>
</dbReference>
<dbReference type="CDD" id="cd22912">
    <property type="entry name" value="HFD_H4"/>
    <property type="match status" value="1"/>
</dbReference>
<dbReference type="FunFam" id="1.10.20.10:FF:000007">
    <property type="entry name" value="Histone H4"/>
    <property type="match status" value="1"/>
</dbReference>
<dbReference type="Gene3D" id="1.10.20.10">
    <property type="entry name" value="Histone, subunit A"/>
    <property type="match status" value="1"/>
</dbReference>
<dbReference type="InterPro" id="IPR035425">
    <property type="entry name" value="CENP-T/H4_C"/>
</dbReference>
<dbReference type="InterPro" id="IPR009072">
    <property type="entry name" value="Histone-fold"/>
</dbReference>
<dbReference type="InterPro" id="IPR001951">
    <property type="entry name" value="Histone_H4"/>
</dbReference>
<dbReference type="InterPro" id="IPR019809">
    <property type="entry name" value="Histone_H4_CS"/>
</dbReference>
<dbReference type="PANTHER" id="PTHR10484">
    <property type="entry name" value="HISTONE H4"/>
    <property type="match status" value="1"/>
</dbReference>
<dbReference type="Pfam" id="PF15511">
    <property type="entry name" value="CENP-T_C"/>
    <property type="match status" value="1"/>
</dbReference>
<dbReference type="PRINTS" id="PR00623">
    <property type="entry name" value="HISTONEH4"/>
</dbReference>
<dbReference type="SMART" id="SM00417">
    <property type="entry name" value="H4"/>
    <property type="match status" value="1"/>
</dbReference>
<dbReference type="SUPFAM" id="SSF47113">
    <property type="entry name" value="Histone-fold"/>
    <property type="match status" value="1"/>
</dbReference>
<dbReference type="PROSITE" id="PS00047">
    <property type="entry name" value="HISTONE_H4"/>
    <property type="match status" value="1"/>
</dbReference>
<reference key="1">
    <citation type="journal article" date="2004" name="Science">
        <title>The Ashbya gossypii genome as a tool for mapping the ancient Saccharomyces cerevisiae genome.</title>
        <authorList>
            <person name="Dietrich F.S."/>
            <person name="Voegeli S."/>
            <person name="Brachat S."/>
            <person name="Lerch A."/>
            <person name="Gates K."/>
            <person name="Steiner S."/>
            <person name="Mohr C."/>
            <person name="Poehlmann R."/>
            <person name="Luedi P."/>
            <person name="Choi S."/>
            <person name="Wing R.A."/>
            <person name="Flavier A."/>
            <person name="Gaffney T.D."/>
            <person name="Philippsen P."/>
        </authorList>
    </citation>
    <scope>NUCLEOTIDE SEQUENCE [LARGE SCALE GENOMIC DNA]</scope>
    <source>
        <strain>ATCC 10895 / CBS 109.51 / FGSC 9923 / NRRL Y-1056</strain>
    </source>
</reference>
<reference key="2">
    <citation type="journal article" date="2013" name="G3 (Bethesda)">
        <title>Genomes of Ashbya fungi isolated from insects reveal four mating-type loci, numerous translocations, lack of transposons, and distinct gene duplications.</title>
        <authorList>
            <person name="Dietrich F.S."/>
            <person name="Voegeli S."/>
            <person name="Kuo S."/>
            <person name="Philippsen P."/>
        </authorList>
    </citation>
    <scope>GENOME REANNOTATION</scope>
    <scope>SEQUENCE REVISION TO 36 AND 62</scope>
    <source>
        <strain>ATCC 10895 / CBS 109.51 / FGSC 9923 / NRRL Y-1056</strain>
    </source>
</reference>
<evidence type="ECO:0000250" key="1"/>
<evidence type="ECO:0000250" key="2">
    <source>
        <dbReference type="UniProtKB" id="P02309"/>
    </source>
</evidence>
<evidence type="ECO:0000250" key="3">
    <source>
        <dbReference type="UniProtKB" id="P62805"/>
    </source>
</evidence>
<evidence type="ECO:0000256" key="4">
    <source>
        <dbReference type="SAM" id="MobiDB-lite"/>
    </source>
</evidence>
<evidence type="ECO:0000305" key="5"/>
<keyword id="KW-0007">Acetylation</keyword>
<keyword id="KW-0158">Chromosome</keyword>
<keyword id="KW-0238">DNA-binding</keyword>
<keyword id="KW-0488">Methylation</keyword>
<keyword id="KW-0544">Nucleosome core</keyword>
<keyword id="KW-0539">Nucleus</keyword>
<keyword id="KW-1185">Reference proteome</keyword>
<sequence>MSGRGKGGKGLGKGGAKRHRKILRDNIQGITKPAIRRLARRGGVKRISGLIYEDVRAVLKSFLESVIRDAVTYTEHAKRKTVTSLDVVYALKRQGRTLYGFGG</sequence>
<accession>Q75AX1</accession>
<protein>
    <recommendedName>
        <fullName>Histone H4.2</fullName>
    </recommendedName>
</protein>